<evidence type="ECO:0000255" key="1">
    <source>
        <dbReference type="HAMAP-Rule" id="MF_00274"/>
    </source>
</evidence>
<protein>
    <recommendedName>
        <fullName evidence="1">Nucleoid-associated protein GAU_1113</fullName>
    </recommendedName>
</protein>
<proteinExistence type="inferred from homology"/>
<feature type="chain" id="PRO_1000204773" description="Nucleoid-associated protein GAU_1113">
    <location>
        <begin position="1"/>
        <end position="104"/>
    </location>
</feature>
<sequence>MDLFKMLGQFKDMQGRMQTMQEEMSQRTFSALAGGGLVTADVDGKMQLKRIKLDASVVNPGDIEMLEDLIVVAVAEAQKKAADAMQMELQKVTGGIDLPFKLPF</sequence>
<organism>
    <name type="scientific">Gemmatimonas aurantiaca (strain DSM 14586 / JCM 11422 / NBRC 100505 / T-27)</name>
    <dbReference type="NCBI Taxonomy" id="379066"/>
    <lineage>
        <taxon>Bacteria</taxon>
        <taxon>Pseudomonadati</taxon>
        <taxon>Gemmatimonadota</taxon>
        <taxon>Gemmatimonadia</taxon>
        <taxon>Gemmatimonadales</taxon>
        <taxon>Gemmatimonadaceae</taxon>
        <taxon>Gemmatimonas</taxon>
    </lineage>
</organism>
<dbReference type="EMBL" id="AP009153">
    <property type="protein sequence ID" value="BAH38155.1"/>
    <property type="molecule type" value="Genomic_DNA"/>
</dbReference>
<dbReference type="RefSeq" id="WP_012682602.1">
    <property type="nucleotide sequence ID" value="NC_012489.1"/>
</dbReference>
<dbReference type="SMR" id="C1A7E5"/>
<dbReference type="STRING" id="379066.GAU_1113"/>
<dbReference type="KEGG" id="gau:GAU_1113"/>
<dbReference type="eggNOG" id="COG0718">
    <property type="taxonomic scope" value="Bacteria"/>
</dbReference>
<dbReference type="HOGENOM" id="CLU_140930_2_1_0"/>
<dbReference type="OrthoDB" id="9803080at2"/>
<dbReference type="Proteomes" id="UP000002209">
    <property type="component" value="Chromosome"/>
</dbReference>
<dbReference type="GO" id="GO:0043590">
    <property type="term" value="C:bacterial nucleoid"/>
    <property type="evidence" value="ECO:0007669"/>
    <property type="project" value="UniProtKB-UniRule"/>
</dbReference>
<dbReference type="GO" id="GO:0005829">
    <property type="term" value="C:cytosol"/>
    <property type="evidence" value="ECO:0007669"/>
    <property type="project" value="TreeGrafter"/>
</dbReference>
<dbReference type="GO" id="GO:0003677">
    <property type="term" value="F:DNA binding"/>
    <property type="evidence" value="ECO:0007669"/>
    <property type="project" value="UniProtKB-UniRule"/>
</dbReference>
<dbReference type="Gene3D" id="3.30.1310.10">
    <property type="entry name" value="Nucleoid-associated protein YbaB-like domain"/>
    <property type="match status" value="1"/>
</dbReference>
<dbReference type="HAMAP" id="MF_00274">
    <property type="entry name" value="DNA_YbaB_EbfC"/>
    <property type="match status" value="1"/>
</dbReference>
<dbReference type="InterPro" id="IPR036894">
    <property type="entry name" value="YbaB-like_sf"/>
</dbReference>
<dbReference type="InterPro" id="IPR004401">
    <property type="entry name" value="YbaB/EbfC"/>
</dbReference>
<dbReference type="NCBIfam" id="TIGR00103">
    <property type="entry name" value="DNA_YbaB_EbfC"/>
    <property type="match status" value="1"/>
</dbReference>
<dbReference type="PANTHER" id="PTHR33449">
    <property type="entry name" value="NUCLEOID-ASSOCIATED PROTEIN YBAB"/>
    <property type="match status" value="1"/>
</dbReference>
<dbReference type="PANTHER" id="PTHR33449:SF1">
    <property type="entry name" value="NUCLEOID-ASSOCIATED PROTEIN YBAB"/>
    <property type="match status" value="1"/>
</dbReference>
<dbReference type="Pfam" id="PF02575">
    <property type="entry name" value="YbaB_DNA_bd"/>
    <property type="match status" value="1"/>
</dbReference>
<dbReference type="PIRSF" id="PIRSF004555">
    <property type="entry name" value="UCP004555"/>
    <property type="match status" value="1"/>
</dbReference>
<dbReference type="SUPFAM" id="SSF82607">
    <property type="entry name" value="YbaB-like"/>
    <property type="match status" value="1"/>
</dbReference>
<gene>
    <name type="ordered locus">GAU_1113</name>
</gene>
<name>Y1113_GEMAT</name>
<accession>C1A7E5</accession>
<reference key="1">
    <citation type="submission" date="2006-03" db="EMBL/GenBank/DDBJ databases">
        <title>Complete genome sequence of Gemmatimonas aurantiaca T-27 that represents a novel phylum Gemmatimonadetes.</title>
        <authorList>
            <person name="Takasaki K."/>
            <person name="Ichikawa N."/>
            <person name="Miura H."/>
            <person name="Matsushita S."/>
            <person name="Watanabe Y."/>
            <person name="Oguchi A."/>
            <person name="Ankai A."/>
            <person name="Yashiro I."/>
            <person name="Takahashi M."/>
            <person name="Terui Y."/>
            <person name="Fukui S."/>
            <person name="Yokoyama H."/>
            <person name="Tanikawa S."/>
            <person name="Hanada S."/>
            <person name="Kamagata Y."/>
            <person name="Fujita N."/>
        </authorList>
    </citation>
    <scope>NUCLEOTIDE SEQUENCE [LARGE SCALE GENOMIC DNA]</scope>
    <source>
        <strain>DSM 14586 / JCM 11422 / NBRC 100505 / T-27</strain>
    </source>
</reference>
<keyword id="KW-0963">Cytoplasm</keyword>
<keyword id="KW-0238">DNA-binding</keyword>
<keyword id="KW-1185">Reference proteome</keyword>
<comment type="function">
    <text evidence="1">Binds to DNA and alters its conformation. May be involved in regulation of gene expression, nucleoid organization and DNA protection.</text>
</comment>
<comment type="subunit">
    <text evidence="1">Homodimer.</text>
</comment>
<comment type="subcellular location">
    <subcellularLocation>
        <location evidence="1">Cytoplasm</location>
        <location evidence="1">Nucleoid</location>
    </subcellularLocation>
</comment>
<comment type="similarity">
    <text evidence="1">Belongs to the YbaB/EbfC family.</text>
</comment>